<protein>
    <recommendedName>
        <fullName evidence="1">Outer-membrane lipoprotein LolB</fullName>
    </recommendedName>
</protein>
<reference key="1">
    <citation type="journal article" date="2011" name="J. Bacteriol.">
        <title>Comparative genomics of 28 Salmonella enterica isolates: evidence for CRISPR-mediated adaptive sublineage evolution.</title>
        <authorList>
            <person name="Fricke W.F."/>
            <person name="Mammel M.K."/>
            <person name="McDermott P.F."/>
            <person name="Tartera C."/>
            <person name="White D.G."/>
            <person name="Leclerc J.E."/>
            <person name="Ravel J."/>
            <person name="Cebula T.A."/>
        </authorList>
    </citation>
    <scope>NUCLEOTIDE SEQUENCE [LARGE SCALE GENOMIC DNA]</scope>
    <source>
        <strain>SL476</strain>
    </source>
</reference>
<name>LOLB_SALHS</name>
<keyword id="KW-0998">Cell outer membrane</keyword>
<keyword id="KW-0143">Chaperone</keyword>
<keyword id="KW-0449">Lipoprotein</keyword>
<keyword id="KW-0472">Membrane</keyword>
<keyword id="KW-0564">Palmitate</keyword>
<keyword id="KW-0653">Protein transport</keyword>
<keyword id="KW-0732">Signal</keyword>
<keyword id="KW-0813">Transport</keyword>
<comment type="function">
    <text evidence="1">Plays a critical role in the incorporation of lipoproteins in the outer membrane after they are released by the LolA protein.</text>
</comment>
<comment type="subunit">
    <text evidence="1">Monomer.</text>
</comment>
<comment type="subcellular location">
    <subcellularLocation>
        <location evidence="1">Cell outer membrane</location>
        <topology evidence="1">Lipid-anchor</topology>
    </subcellularLocation>
</comment>
<comment type="similarity">
    <text evidence="1">Belongs to the LolB family.</text>
</comment>
<sequence>MTLPDFRLIRLLPLASLVLTACTLPGHKGPGKSPDSPQWRQHQQEVRHLNQYQTRGAFAYISDDQKVYARFFWQQTGQDRYRLLLTNPLGSTELELNAQPGNVQLVDNKGQRYTADDAEEMIGKLTGMPIPLNSLRQWILGLPGDATDYKLDDQYRLSEVNYRQDGKNWKVVYGGYDSKTQPAMPANMELSDGSQRIKLKMDNWIVK</sequence>
<accession>B4TKA7</accession>
<feature type="signal peptide" evidence="1">
    <location>
        <begin position="1"/>
        <end position="21"/>
    </location>
</feature>
<feature type="chain" id="PRO_1000100506" description="Outer-membrane lipoprotein LolB">
    <location>
        <begin position="22"/>
        <end position="207"/>
    </location>
</feature>
<feature type="lipid moiety-binding region" description="N-palmitoyl cysteine" evidence="1">
    <location>
        <position position="22"/>
    </location>
</feature>
<feature type="lipid moiety-binding region" description="S-diacylglycerol cysteine" evidence="1">
    <location>
        <position position="22"/>
    </location>
</feature>
<proteinExistence type="inferred from homology"/>
<evidence type="ECO:0000255" key="1">
    <source>
        <dbReference type="HAMAP-Rule" id="MF_00233"/>
    </source>
</evidence>
<organism>
    <name type="scientific">Salmonella heidelberg (strain SL476)</name>
    <dbReference type="NCBI Taxonomy" id="454169"/>
    <lineage>
        <taxon>Bacteria</taxon>
        <taxon>Pseudomonadati</taxon>
        <taxon>Pseudomonadota</taxon>
        <taxon>Gammaproteobacteria</taxon>
        <taxon>Enterobacterales</taxon>
        <taxon>Enterobacteriaceae</taxon>
        <taxon>Salmonella</taxon>
    </lineage>
</organism>
<dbReference type="EMBL" id="CP001120">
    <property type="protein sequence ID" value="ACF67267.1"/>
    <property type="molecule type" value="Genomic_DNA"/>
</dbReference>
<dbReference type="RefSeq" id="WP_000174484.1">
    <property type="nucleotide sequence ID" value="NC_011083.1"/>
</dbReference>
<dbReference type="SMR" id="B4TKA7"/>
<dbReference type="KEGG" id="seh:SeHA_C1974"/>
<dbReference type="HOGENOM" id="CLU_092816_1_1_6"/>
<dbReference type="Proteomes" id="UP000001866">
    <property type="component" value="Chromosome"/>
</dbReference>
<dbReference type="GO" id="GO:0009279">
    <property type="term" value="C:cell outer membrane"/>
    <property type="evidence" value="ECO:0007669"/>
    <property type="project" value="UniProtKB-SubCell"/>
</dbReference>
<dbReference type="GO" id="GO:0044874">
    <property type="term" value="P:lipoprotein localization to outer membrane"/>
    <property type="evidence" value="ECO:0007669"/>
    <property type="project" value="UniProtKB-UniRule"/>
</dbReference>
<dbReference type="GO" id="GO:0015031">
    <property type="term" value="P:protein transport"/>
    <property type="evidence" value="ECO:0007669"/>
    <property type="project" value="UniProtKB-KW"/>
</dbReference>
<dbReference type="CDD" id="cd16326">
    <property type="entry name" value="LolB"/>
    <property type="match status" value="1"/>
</dbReference>
<dbReference type="FunFam" id="2.50.20.10:FF:000002">
    <property type="entry name" value="Outer-membrane lipoprotein LolB"/>
    <property type="match status" value="1"/>
</dbReference>
<dbReference type="Gene3D" id="2.50.20.10">
    <property type="entry name" value="Lipoprotein localisation LolA/LolB/LppX"/>
    <property type="match status" value="1"/>
</dbReference>
<dbReference type="HAMAP" id="MF_00233">
    <property type="entry name" value="LolB"/>
    <property type="match status" value="1"/>
</dbReference>
<dbReference type="InterPro" id="IPR029046">
    <property type="entry name" value="LolA/LolB/LppX"/>
</dbReference>
<dbReference type="InterPro" id="IPR004565">
    <property type="entry name" value="OM_lipoprot_LolB"/>
</dbReference>
<dbReference type="NCBIfam" id="TIGR00548">
    <property type="entry name" value="lolB"/>
    <property type="match status" value="1"/>
</dbReference>
<dbReference type="Pfam" id="PF03550">
    <property type="entry name" value="LolB"/>
    <property type="match status" value="1"/>
</dbReference>
<dbReference type="SUPFAM" id="SSF89392">
    <property type="entry name" value="Prokaryotic lipoproteins and lipoprotein localization factors"/>
    <property type="match status" value="1"/>
</dbReference>
<dbReference type="PROSITE" id="PS51257">
    <property type="entry name" value="PROKAR_LIPOPROTEIN"/>
    <property type="match status" value="1"/>
</dbReference>
<gene>
    <name evidence="1" type="primary">lolB</name>
    <name type="ordered locus">SeHA_C1974</name>
</gene>